<organism>
    <name type="scientific">Staphylococcus aureus (strain MW2)</name>
    <dbReference type="NCBI Taxonomy" id="196620"/>
    <lineage>
        <taxon>Bacteria</taxon>
        <taxon>Bacillati</taxon>
        <taxon>Bacillota</taxon>
        <taxon>Bacilli</taxon>
        <taxon>Bacillales</taxon>
        <taxon>Staphylococcaceae</taxon>
        <taxon>Staphylococcus</taxon>
    </lineage>
</organism>
<name>RL34_STAAW</name>
<sequence length="45" mass="5434">MVKRTYQPNKRKHSKVHGFRKRMSTKNGRKVLARRRRKGRKVLSA</sequence>
<evidence type="ECO:0000255" key="1">
    <source>
        <dbReference type="HAMAP-Rule" id="MF_00391"/>
    </source>
</evidence>
<evidence type="ECO:0000256" key="2">
    <source>
        <dbReference type="SAM" id="MobiDB-lite"/>
    </source>
</evidence>
<evidence type="ECO:0000305" key="3"/>
<comment type="similarity">
    <text evidence="1">Belongs to the bacterial ribosomal protein bL34 family.</text>
</comment>
<reference key="1">
    <citation type="journal article" date="2002" name="Lancet">
        <title>Genome and virulence determinants of high virulence community-acquired MRSA.</title>
        <authorList>
            <person name="Baba T."/>
            <person name="Takeuchi F."/>
            <person name="Kuroda M."/>
            <person name="Yuzawa H."/>
            <person name="Aoki K."/>
            <person name="Oguchi A."/>
            <person name="Nagai Y."/>
            <person name="Iwama N."/>
            <person name="Asano K."/>
            <person name="Naimi T."/>
            <person name="Kuroda H."/>
            <person name="Cui L."/>
            <person name="Yamamoto K."/>
            <person name="Hiramatsu K."/>
        </authorList>
    </citation>
    <scope>NUCLEOTIDE SEQUENCE [LARGE SCALE GENOMIC DNA]</scope>
    <source>
        <strain>MW2</strain>
    </source>
</reference>
<protein>
    <recommendedName>
        <fullName evidence="1">Large ribosomal subunit protein bL34</fullName>
    </recommendedName>
    <alternativeName>
        <fullName evidence="3">50S ribosomal protein L34</fullName>
    </alternativeName>
</protein>
<gene>
    <name evidence="1" type="primary">rpmH</name>
    <name type="ordered locus">MW2632</name>
</gene>
<keyword id="KW-0002">3D-structure</keyword>
<keyword id="KW-0687">Ribonucleoprotein</keyword>
<keyword id="KW-0689">Ribosomal protein</keyword>
<accession>P66254</accession>
<accession>Q99QT1</accession>
<feature type="chain" id="PRO_0000187465" description="Large ribosomal subunit protein bL34">
    <location>
        <begin position="1"/>
        <end position="45"/>
    </location>
</feature>
<feature type="region of interest" description="Disordered" evidence="2">
    <location>
        <begin position="1"/>
        <end position="45"/>
    </location>
</feature>
<dbReference type="EMBL" id="BA000033">
    <property type="protein sequence ID" value="BAB96497.1"/>
    <property type="molecule type" value="Genomic_DNA"/>
</dbReference>
<dbReference type="RefSeq" id="WP_000240855.1">
    <property type="nucleotide sequence ID" value="NC_003923.1"/>
</dbReference>
<dbReference type="PDB" id="8Y36">
    <property type="method" value="EM"/>
    <property type="resolution" value="2.65 A"/>
    <property type="chains" value="2=2-44"/>
</dbReference>
<dbReference type="PDB" id="8Y37">
    <property type="method" value="EM"/>
    <property type="resolution" value="2.53 A"/>
    <property type="chains" value="2=2-44"/>
</dbReference>
<dbReference type="PDB" id="8Y38">
    <property type="method" value="EM"/>
    <property type="resolution" value="2.58 A"/>
    <property type="chains" value="2=2-44"/>
</dbReference>
<dbReference type="PDB" id="8Y39">
    <property type="method" value="EM"/>
    <property type="resolution" value="3.60 A"/>
    <property type="chains" value="2=2-44"/>
</dbReference>
<dbReference type="PDBsum" id="8Y36"/>
<dbReference type="PDBsum" id="8Y37"/>
<dbReference type="PDBsum" id="8Y38"/>
<dbReference type="PDBsum" id="8Y39"/>
<dbReference type="EMDB" id="EMD-38873"/>
<dbReference type="EMDB" id="EMD-38874"/>
<dbReference type="EMDB" id="EMD-38875"/>
<dbReference type="EMDB" id="EMD-38876"/>
<dbReference type="SMR" id="P66254"/>
<dbReference type="GeneID" id="98347025"/>
<dbReference type="KEGG" id="sam:MW2632"/>
<dbReference type="HOGENOM" id="CLU_129938_2_0_9"/>
<dbReference type="GO" id="GO:1990904">
    <property type="term" value="C:ribonucleoprotein complex"/>
    <property type="evidence" value="ECO:0007669"/>
    <property type="project" value="UniProtKB-KW"/>
</dbReference>
<dbReference type="GO" id="GO:0005840">
    <property type="term" value="C:ribosome"/>
    <property type="evidence" value="ECO:0007669"/>
    <property type="project" value="UniProtKB-KW"/>
</dbReference>
<dbReference type="GO" id="GO:0003735">
    <property type="term" value="F:structural constituent of ribosome"/>
    <property type="evidence" value="ECO:0007669"/>
    <property type="project" value="InterPro"/>
</dbReference>
<dbReference type="GO" id="GO:0006412">
    <property type="term" value="P:translation"/>
    <property type="evidence" value="ECO:0007669"/>
    <property type="project" value="UniProtKB-UniRule"/>
</dbReference>
<dbReference type="FunFam" id="1.10.287.3980:FF:000001">
    <property type="entry name" value="Mitochondrial ribosomal protein L34"/>
    <property type="match status" value="1"/>
</dbReference>
<dbReference type="Gene3D" id="1.10.287.3980">
    <property type="match status" value="1"/>
</dbReference>
<dbReference type="HAMAP" id="MF_00391">
    <property type="entry name" value="Ribosomal_bL34"/>
    <property type="match status" value="1"/>
</dbReference>
<dbReference type="InterPro" id="IPR000271">
    <property type="entry name" value="Ribosomal_bL34"/>
</dbReference>
<dbReference type="InterPro" id="IPR020939">
    <property type="entry name" value="Ribosomal_bL34_CS"/>
</dbReference>
<dbReference type="NCBIfam" id="TIGR01030">
    <property type="entry name" value="rpmH_bact"/>
    <property type="match status" value="1"/>
</dbReference>
<dbReference type="PANTHER" id="PTHR14503:SF4">
    <property type="entry name" value="LARGE RIBOSOMAL SUBUNIT PROTEIN BL34M"/>
    <property type="match status" value="1"/>
</dbReference>
<dbReference type="PANTHER" id="PTHR14503">
    <property type="entry name" value="MITOCHONDRIAL RIBOSOMAL PROTEIN 34 FAMILY MEMBER"/>
    <property type="match status" value="1"/>
</dbReference>
<dbReference type="Pfam" id="PF00468">
    <property type="entry name" value="Ribosomal_L34"/>
    <property type="match status" value="1"/>
</dbReference>
<dbReference type="PROSITE" id="PS00784">
    <property type="entry name" value="RIBOSOMAL_L34"/>
    <property type="match status" value="1"/>
</dbReference>
<proteinExistence type="evidence at protein level"/>